<dbReference type="EMBL" id="AE016826">
    <property type="protein sequence ID" value="AAO27037.1"/>
    <property type="molecule type" value="Genomic_DNA"/>
</dbReference>
<dbReference type="RefSeq" id="WP_011091438.1">
    <property type="nucleotide sequence ID" value="NC_004545.1"/>
</dbReference>
<dbReference type="SMR" id="Q89AH5"/>
<dbReference type="STRING" id="224915.bbp_315"/>
<dbReference type="KEGG" id="bab:bbp_315"/>
<dbReference type="eggNOG" id="COG1706">
    <property type="taxonomic scope" value="Bacteria"/>
</dbReference>
<dbReference type="HOGENOM" id="CLU_045235_1_0_6"/>
<dbReference type="OrthoDB" id="9786431at2"/>
<dbReference type="Proteomes" id="UP000000601">
    <property type="component" value="Chromosome"/>
</dbReference>
<dbReference type="GO" id="GO:0009428">
    <property type="term" value="C:bacterial-type flagellum basal body, distal rod, P ring"/>
    <property type="evidence" value="ECO:0007669"/>
    <property type="project" value="InterPro"/>
</dbReference>
<dbReference type="GO" id="GO:0030288">
    <property type="term" value="C:outer membrane-bounded periplasmic space"/>
    <property type="evidence" value="ECO:0007669"/>
    <property type="project" value="InterPro"/>
</dbReference>
<dbReference type="GO" id="GO:0005198">
    <property type="term" value="F:structural molecule activity"/>
    <property type="evidence" value="ECO:0007669"/>
    <property type="project" value="InterPro"/>
</dbReference>
<dbReference type="GO" id="GO:0071973">
    <property type="term" value="P:bacterial-type flagellum-dependent cell motility"/>
    <property type="evidence" value="ECO:0007669"/>
    <property type="project" value="InterPro"/>
</dbReference>
<dbReference type="HAMAP" id="MF_00416">
    <property type="entry name" value="FlgI"/>
    <property type="match status" value="1"/>
</dbReference>
<dbReference type="InterPro" id="IPR001782">
    <property type="entry name" value="Flag_FlgI"/>
</dbReference>
<dbReference type="NCBIfam" id="NF003676">
    <property type="entry name" value="PRK05303.1"/>
    <property type="match status" value="1"/>
</dbReference>
<dbReference type="PANTHER" id="PTHR30381">
    <property type="entry name" value="FLAGELLAR P-RING PERIPLASMIC PROTEIN FLGI"/>
    <property type="match status" value="1"/>
</dbReference>
<dbReference type="PANTHER" id="PTHR30381:SF0">
    <property type="entry name" value="FLAGELLAR P-RING PROTEIN"/>
    <property type="match status" value="1"/>
</dbReference>
<dbReference type="Pfam" id="PF02119">
    <property type="entry name" value="FlgI"/>
    <property type="match status" value="1"/>
</dbReference>
<dbReference type="PRINTS" id="PR01010">
    <property type="entry name" value="FLGPRINGFLGI"/>
</dbReference>
<reference key="1">
    <citation type="journal article" date="2003" name="Proc. Natl. Acad. Sci. U.S.A.">
        <title>Reductive genome evolution in Buchnera aphidicola.</title>
        <authorList>
            <person name="van Ham R.C.H.J."/>
            <person name="Kamerbeek J."/>
            <person name="Palacios C."/>
            <person name="Rausell C."/>
            <person name="Abascal F."/>
            <person name="Bastolla U."/>
            <person name="Fernandez J.M."/>
            <person name="Jimenez L."/>
            <person name="Postigo M."/>
            <person name="Silva F.J."/>
            <person name="Tamames J."/>
            <person name="Viguera E."/>
            <person name="Latorre A."/>
            <person name="Valencia A."/>
            <person name="Moran F."/>
            <person name="Moya A."/>
        </authorList>
    </citation>
    <scope>NUCLEOTIDE SEQUENCE [LARGE SCALE GENOMIC DNA]</scope>
    <source>
        <strain>Bp</strain>
    </source>
</reference>
<gene>
    <name evidence="1" type="primary">flgI</name>
    <name type="ordered locus">bbp_315</name>
</gene>
<evidence type="ECO:0000255" key="1">
    <source>
        <dbReference type="HAMAP-Rule" id="MF_00416"/>
    </source>
</evidence>
<name>FLGI_BUCBP</name>
<comment type="function">
    <text evidence="1">Assembles around the rod to form the L-ring and probably protects the motor/basal body from shearing forces during rotation.</text>
</comment>
<comment type="subunit">
    <text evidence="1">The basal body constitutes a major portion of the flagellar organelle and consists of four rings (L,P,S, and M) mounted on a central rod.</text>
</comment>
<comment type="subcellular location">
    <subcellularLocation>
        <location evidence="1">Bacterial flagellum basal body</location>
    </subcellularLocation>
</comment>
<comment type="similarity">
    <text evidence="1">Belongs to the FlgI family.</text>
</comment>
<protein>
    <recommendedName>
        <fullName evidence="1">Flagellar P-ring protein</fullName>
    </recommendedName>
    <alternativeName>
        <fullName evidence="1">Basal body P-ring protein</fullName>
    </alternativeName>
</protein>
<keyword id="KW-0975">Bacterial flagellum</keyword>
<keyword id="KW-1185">Reference proteome</keyword>
<keyword id="KW-0732">Signal</keyword>
<accession>Q89AH5</accession>
<sequence>MFNQSFLKYMLFGFFLFSFHAHADRIRDLITIQGIRYNQLIGYGLVVGLDGTGDRTNQISYTTHALKNMLFQLGITFPNEQNAKFKNIAAVMVTTKFPNFTHIGQQVDVIVSSVGDATSLQGGTLLMTPLRGTDNKIYAVAQGNIIINDKNSVERFKNILVNNHLNNGMIINGATIEREMHTDFGKNETLNLQLNNEDFTVAQEISKKINMQYPKSAVALNSKIIQVCIPNNNIEQVEMLATIQNINIPIPIQDAKILINAKTGNIITNQTININTCAITHKNISMTIAFNKLKINRLVPNPIIKSDKNNNKTLNDEQIYKNNYNTNNFQYLEKTSNLNTIICALNLFDITTTELISILQSMHDAGCFHAKLEIT</sequence>
<feature type="signal peptide" evidence="1">
    <location>
        <begin position="1"/>
        <end position="23"/>
    </location>
</feature>
<feature type="chain" id="PRO_0000009497" description="Flagellar P-ring protein">
    <location>
        <begin position="24"/>
        <end position="375"/>
    </location>
</feature>
<organism>
    <name type="scientific">Buchnera aphidicola subsp. Baizongia pistaciae (strain Bp)</name>
    <dbReference type="NCBI Taxonomy" id="224915"/>
    <lineage>
        <taxon>Bacteria</taxon>
        <taxon>Pseudomonadati</taxon>
        <taxon>Pseudomonadota</taxon>
        <taxon>Gammaproteobacteria</taxon>
        <taxon>Enterobacterales</taxon>
        <taxon>Erwiniaceae</taxon>
        <taxon>Buchnera</taxon>
    </lineage>
</organism>
<proteinExistence type="inferred from homology"/>